<protein>
    <recommendedName>
        <fullName evidence="1">Beta-ketoacyl-[acyl-carrier-protein] synthase III</fullName>
        <shortName evidence="1">Beta-ketoacyl-ACP synthase III</shortName>
        <shortName evidence="1">KAS III</shortName>
        <ecNumber evidence="1">2.3.1.180</ecNumber>
    </recommendedName>
    <alternativeName>
        <fullName evidence="1">3-oxoacyl-[acyl-carrier-protein] synthase 3</fullName>
    </alternativeName>
    <alternativeName>
        <fullName evidence="1">3-oxoacyl-[acyl-carrier-protein] synthase III</fullName>
    </alternativeName>
</protein>
<keyword id="KW-0012">Acyltransferase</keyword>
<keyword id="KW-0963">Cytoplasm</keyword>
<keyword id="KW-0275">Fatty acid biosynthesis</keyword>
<keyword id="KW-0276">Fatty acid metabolism</keyword>
<keyword id="KW-0444">Lipid biosynthesis</keyword>
<keyword id="KW-0443">Lipid metabolism</keyword>
<keyword id="KW-0511">Multifunctional enzyme</keyword>
<keyword id="KW-0808">Transferase</keyword>
<sequence length="324" mass="34750">MSKRIYARIAGTGGYLPEKVLTNDDLAHIVDTSDEWIRTRTGIRERHIAAEGETTSDLAYEAAICALEAAEVRSADLDLIVVGTTTPDLIFPSTACLLQARLGAVGCGAFDVNAACSGFVYALSVAEKFVSSGCSKTVLVVGADTLTRIIDWSDRTTCVLFGDGAGAVVLKADEDTGILSTHLHADGSKKELLWDPVGVSVGFGEGKDCGALLMKGNEVFKYAVKALDRVVDETLEANHLDKHELDWLIPHQANLRIIEATARRLDMSMDQVVVTVDRHGNTSTASVPLALDEAIRSGRVQRGQLLLLEAFGGGFTWGSALLRY</sequence>
<feature type="chain" id="PRO_0000110513" description="Beta-ketoacyl-[acyl-carrier-protein] synthase III">
    <location>
        <begin position="1"/>
        <end position="324"/>
    </location>
</feature>
<feature type="region of interest" description="ACP-binding" evidence="1">
    <location>
        <begin position="252"/>
        <end position="256"/>
    </location>
</feature>
<feature type="active site" evidence="1">
    <location>
        <position position="116"/>
    </location>
</feature>
<feature type="active site" evidence="1">
    <location>
        <position position="251"/>
    </location>
</feature>
<feature type="active site" evidence="1">
    <location>
        <position position="281"/>
    </location>
</feature>
<comment type="function">
    <text evidence="1">Catalyzes the condensation reaction of fatty acid synthesis by the addition to an acyl acceptor of two carbons from malonyl-ACP. Catalyzes the first condensation reaction which initiates fatty acid synthesis and may therefore play a role in governing the total rate of fatty acid production. Possesses both acetoacetyl-ACP synthase and acetyl transacylase activities. Its substrate specificity determines the biosynthesis of branched-chain and/or straight-chain of fatty acids.</text>
</comment>
<comment type="catalytic activity">
    <reaction evidence="1">
        <text>malonyl-[ACP] + acetyl-CoA + H(+) = 3-oxobutanoyl-[ACP] + CO2 + CoA</text>
        <dbReference type="Rhea" id="RHEA:12080"/>
        <dbReference type="Rhea" id="RHEA-COMP:9623"/>
        <dbReference type="Rhea" id="RHEA-COMP:9625"/>
        <dbReference type="ChEBI" id="CHEBI:15378"/>
        <dbReference type="ChEBI" id="CHEBI:16526"/>
        <dbReference type="ChEBI" id="CHEBI:57287"/>
        <dbReference type="ChEBI" id="CHEBI:57288"/>
        <dbReference type="ChEBI" id="CHEBI:78449"/>
        <dbReference type="ChEBI" id="CHEBI:78450"/>
        <dbReference type="EC" id="2.3.1.180"/>
    </reaction>
</comment>
<comment type="pathway">
    <text evidence="1">Lipid metabolism; fatty acid biosynthesis.</text>
</comment>
<comment type="subunit">
    <text evidence="1">Homodimer.</text>
</comment>
<comment type="subcellular location">
    <subcellularLocation>
        <location evidence="1">Cytoplasm</location>
    </subcellularLocation>
</comment>
<comment type="domain">
    <text evidence="1">The last Arg residue of the ACP-binding site is essential for the weak association between ACP/AcpP and FabH.</text>
</comment>
<comment type="similarity">
    <text evidence="1">Belongs to the thiolase-like superfamily. FabH family.</text>
</comment>
<name>FABH_XYLFA</name>
<accession>Q9PCG4</accession>
<proteinExistence type="inferred from homology"/>
<gene>
    <name evidence="1" type="primary">fabH</name>
    <name type="ordered locus">XF_1817</name>
</gene>
<evidence type="ECO:0000255" key="1">
    <source>
        <dbReference type="HAMAP-Rule" id="MF_01815"/>
    </source>
</evidence>
<reference key="1">
    <citation type="journal article" date="2000" name="Nature">
        <title>The genome sequence of the plant pathogen Xylella fastidiosa.</title>
        <authorList>
            <person name="Simpson A.J.G."/>
            <person name="Reinach F.C."/>
            <person name="Arruda P."/>
            <person name="Abreu F.A."/>
            <person name="Acencio M."/>
            <person name="Alvarenga R."/>
            <person name="Alves L.M.C."/>
            <person name="Araya J.E."/>
            <person name="Baia G.S."/>
            <person name="Baptista C.S."/>
            <person name="Barros M.H."/>
            <person name="Bonaccorsi E.D."/>
            <person name="Bordin S."/>
            <person name="Bove J.M."/>
            <person name="Briones M.R.S."/>
            <person name="Bueno M.R.P."/>
            <person name="Camargo A.A."/>
            <person name="Camargo L.E.A."/>
            <person name="Carraro D.M."/>
            <person name="Carrer H."/>
            <person name="Colauto N.B."/>
            <person name="Colombo C."/>
            <person name="Costa F.F."/>
            <person name="Costa M.C.R."/>
            <person name="Costa-Neto C.M."/>
            <person name="Coutinho L.L."/>
            <person name="Cristofani M."/>
            <person name="Dias-Neto E."/>
            <person name="Docena C."/>
            <person name="El-Dorry H."/>
            <person name="Facincani A.P."/>
            <person name="Ferreira A.J.S."/>
            <person name="Ferreira V.C.A."/>
            <person name="Ferro J.A."/>
            <person name="Fraga J.S."/>
            <person name="Franca S.C."/>
            <person name="Franco M.C."/>
            <person name="Frohme M."/>
            <person name="Furlan L.R."/>
            <person name="Garnier M."/>
            <person name="Goldman G.H."/>
            <person name="Goldman M.H.S."/>
            <person name="Gomes S.L."/>
            <person name="Gruber A."/>
            <person name="Ho P.L."/>
            <person name="Hoheisel J.D."/>
            <person name="Junqueira M.L."/>
            <person name="Kemper E.L."/>
            <person name="Kitajima J.P."/>
            <person name="Krieger J.E."/>
            <person name="Kuramae E.E."/>
            <person name="Laigret F."/>
            <person name="Lambais M.R."/>
            <person name="Leite L.C.C."/>
            <person name="Lemos E.G.M."/>
            <person name="Lemos M.V.F."/>
            <person name="Lopes S.A."/>
            <person name="Lopes C.R."/>
            <person name="Machado J.A."/>
            <person name="Machado M.A."/>
            <person name="Madeira A.M.B.N."/>
            <person name="Madeira H.M.F."/>
            <person name="Marino C.L."/>
            <person name="Marques M.V."/>
            <person name="Martins E.A.L."/>
            <person name="Martins E.M.F."/>
            <person name="Matsukuma A.Y."/>
            <person name="Menck C.F.M."/>
            <person name="Miracca E.C."/>
            <person name="Miyaki C.Y."/>
            <person name="Monteiro-Vitorello C.B."/>
            <person name="Moon D.H."/>
            <person name="Nagai M.A."/>
            <person name="Nascimento A.L.T.O."/>
            <person name="Netto L.E.S."/>
            <person name="Nhani A. Jr."/>
            <person name="Nobrega F.G."/>
            <person name="Nunes L.R."/>
            <person name="Oliveira M.A."/>
            <person name="de Oliveira M.C."/>
            <person name="de Oliveira R.C."/>
            <person name="Palmieri D.A."/>
            <person name="Paris A."/>
            <person name="Peixoto B.R."/>
            <person name="Pereira G.A.G."/>
            <person name="Pereira H.A. Jr."/>
            <person name="Pesquero J.B."/>
            <person name="Quaggio R.B."/>
            <person name="Roberto P.G."/>
            <person name="Rodrigues V."/>
            <person name="de Rosa A.J.M."/>
            <person name="de Rosa V.E. Jr."/>
            <person name="de Sa R.G."/>
            <person name="Santelli R.V."/>
            <person name="Sawasaki H.E."/>
            <person name="da Silva A.C.R."/>
            <person name="da Silva A.M."/>
            <person name="da Silva F.R."/>
            <person name="Silva W.A. Jr."/>
            <person name="da Silveira J.F."/>
            <person name="Silvestri M.L.Z."/>
            <person name="Siqueira W.J."/>
            <person name="de Souza A.A."/>
            <person name="de Souza A.P."/>
            <person name="Terenzi M.F."/>
            <person name="Truffi D."/>
            <person name="Tsai S.M."/>
            <person name="Tsuhako M.H."/>
            <person name="Vallada H."/>
            <person name="Van Sluys M.A."/>
            <person name="Verjovski-Almeida S."/>
            <person name="Vettore A.L."/>
            <person name="Zago M.A."/>
            <person name="Zatz M."/>
            <person name="Meidanis J."/>
            <person name="Setubal J.C."/>
        </authorList>
    </citation>
    <scope>NUCLEOTIDE SEQUENCE [LARGE SCALE GENOMIC DNA]</scope>
    <source>
        <strain>9a5c</strain>
    </source>
</reference>
<organism>
    <name type="scientific">Xylella fastidiosa (strain 9a5c)</name>
    <dbReference type="NCBI Taxonomy" id="160492"/>
    <lineage>
        <taxon>Bacteria</taxon>
        <taxon>Pseudomonadati</taxon>
        <taxon>Pseudomonadota</taxon>
        <taxon>Gammaproteobacteria</taxon>
        <taxon>Lysobacterales</taxon>
        <taxon>Lysobacteraceae</taxon>
        <taxon>Xylella</taxon>
    </lineage>
</organism>
<dbReference type="EC" id="2.3.1.180" evidence="1"/>
<dbReference type="EMBL" id="AE003849">
    <property type="protein sequence ID" value="AAF84623.1"/>
    <property type="molecule type" value="Genomic_DNA"/>
</dbReference>
<dbReference type="PIR" id="H82633">
    <property type="entry name" value="H82633"/>
</dbReference>
<dbReference type="RefSeq" id="WP_010894284.1">
    <property type="nucleotide sequence ID" value="NC_002488.3"/>
</dbReference>
<dbReference type="SMR" id="Q9PCG4"/>
<dbReference type="STRING" id="160492.XF_1817"/>
<dbReference type="KEGG" id="xfa:XF_1817"/>
<dbReference type="eggNOG" id="COG0332">
    <property type="taxonomic scope" value="Bacteria"/>
</dbReference>
<dbReference type="HOGENOM" id="CLU_039592_3_1_6"/>
<dbReference type="UniPathway" id="UPA00094"/>
<dbReference type="Proteomes" id="UP000000812">
    <property type="component" value="Chromosome"/>
</dbReference>
<dbReference type="GO" id="GO:0005737">
    <property type="term" value="C:cytoplasm"/>
    <property type="evidence" value="ECO:0007669"/>
    <property type="project" value="UniProtKB-SubCell"/>
</dbReference>
<dbReference type="GO" id="GO:0004315">
    <property type="term" value="F:3-oxoacyl-[acyl-carrier-protein] synthase activity"/>
    <property type="evidence" value="ECO:0007669"/>
    <property type="project" value="InterPro"/>
</dbReference>
<dbReference type="GO" id="GO:0033818">
    <property type="term" value="F:beta-ketoacyl-acyl-carrier-protein synthase III activity"/>
    <property type="evidence" value="ECO:0007669"/>
    <property type="project" value="UniProtKB-UniRule"/>
</dbReference>
<dbReference type="GO" id="GO:0006633">
    <property type="term" value="P:fatty acid biosynthetic process"/>
    <property type="evidence" value="ECO:0007669"/>
    <property type="project" value="UniProtKB-UniRule"/>
</dbReference>
<dbReference type="CDD" id="cd00830">
    <property type="entry name" value="KAS_III"/>
    <property type="match status" value="1"/>
</dbReference>
<dbReference type="FunFam" id="3.40.47.10:FF:000004">
    <property type="entry name" value="3-oxoacyl-[acyl-carrier-protein] synthase 3"/>
    <property type="match status" value="1"/>
</dbReference>
<dbReference type="Gene3D" id="3.40.47.10">
    <property type="match status" value="1"/>
</dbReference>
<dbReference type="HAMAP" id="MF_01815">
    <property type="entry name" value="FabH"/>
    <property type="match status" value="1"/>
</dbReference>
<dbReference type="InterPro" id="IPR013747">
    <property type="entry name" value="ACP_syn_III_C"/>
</dbReference>
<dbReference type="InterPro" id="IPR013751">
    <property type="entry name" value="ACP_syn_III_N"/>
</dbReference>
<dbReference type="InterPro" id="IPR004655">
    <property type="entry name" value="FabH"/>
</dbReference>
<dbReference type="InterPro" id="IPR016039">
    <property type="entry name" value="Thiolase-like"/>
</dbReference>
<dbReference type="NCBIfam" id="TIGR00747">
    <property type="entry name" value="fabH"/>
    <property type="match status" value="1"/>
</dbReference>
<dbReference type="NCBIfam" id="NF006829">
    <property type="entry name" value="PRK09352.1"/>
    <property type="match status" value="1"/>
</dbReference>
<dbReference type="PANTHER" id="PTHR43091">
    <property type="entry name" value="3-OXOACYL-[ACYL-CARRIER-PROTEIN] SYNTHASE"/>
    <property type="match status" value="1"/>
</dbReference>
<dbReference type="PANTHER" id="PTHR43091:SF1">
    <property type="entry name" value="BETA-KETOACYL-[ACYL-CARRIER-PROTEIN] SYNTHASE III, CHLOROPLASTIC"/>
    <property type="match status" value="1"/>
</dbReference>
<dbReference type="Pfam" id="PF08545">
    <property type="entry name" value="ACP_syn_III"/>
    <property type="match status" value="1"/>
</dbReference>
<dbReference type="Pfam" id="PF08541">
    <property type="entry name" value="ACP_syn_III_C"/>
    <property type="match status" value="1"/>
</dbReference>
<dbReference type="SUPFAM" id="SSF53901">
    <property type="entry name" value="Thiolase-like"/>
    <property type="match status" value="1"/>
</dbReference>